<reference key="1">
    <citation type="journal article" date="1993" name="Mol. Cell. Biol.">
        <title>Cloning and characterization of E2F-2, a novel protein with the biochemical properties of transcription factor E2F.</title>
        <authorList>
            <person name="Ivey-Hoyle M."/>
            <person name="Conroy R."/>
            <person name="Huber H.E."/>
            <person name="Goodhart P.J."/>
            <person name="Oliff A."/>
            <person name="Heimbrook D.C."/>
        </authorList>
    </citation>
    <scope>NUCLEOTIDE SEQUENCE [MRNA]</scope>
    <source>
        <tissue>Cervix carcinoma</tissue>
    </source>
</reference>
<reference key="2">
    <citation type="journal article" date="2004" name="Nat. Genet.">
        <title>Complete sequencing and characterization of 21,243 full-length human cDNAs.</title>
        <authorList>
            <person name="Ota T."/>
            <person name="Suzuki Y."/>
            <person name="Nishikawa T."/>
            <person name="Otsuki T."/>
            <person name="Sugiyama T."/>
            <person name="Irie R."/>
            <person name="Wakamatsu A."/>
            <person name="Hayashi K."/>
            <person name="Sato H."/>
            <person name="Nagai K."/>
            <person name="Kimura K."/>
            <person name="Makita H."/>
            <person name="Sekine M."/>
            <person name="Obayashi M."/>
            <person name="Nishi T."/>
            <person name="Shibahara T."/>
            <person name="Tanaka T."/>
            <person name="Ishii S."/>
            <person name="Yamamoto J."/>
            <person name="Saito K."/>
            <person name="Kawai Y."/>
            <person name="Isono Y."/>
            <person name="Nakamura Y."/>
            <person name="Nagahari K."/>
            <person name="Murakami K."/>
            <person name="Yasuda T."/>
            <person name="Iwayanagi T."/>
            <person name="Wagatsuma M."/>
            <person name="Shiratori A."/>
            <person name="Sudo H."/>
            <person name="Hosoiri T."/>
            <person name="Kaku Y."/>
            <person name="Kodaira H."/>
            <person name="Kondo H."/>
            <person name="Sugawara M."/>
            <person name="Takahashi M."/>
            <person name="Kanda K."/>
            <person name="Yokoi T."/>
            <person name="Furuya T."/>
            <person name="Kikkawa E."/>
            <person name="Omura Y."/>
            <person name="Abe K."/>
            <person name="Kamihara K."/>
            <person name="Katsuta N."/>
            <person name="Sato K."/>
            <person name="Tanikawa M."/>
            <person name="Yamazaki M."/>
            <person name="Ninomiya K."/>
            <person name="Ishibashi T."/>
            <person name="Yamashita H."/>
            <person name="Murakawa K."/>
            <person name="Fujimori K."/>
            <person name="Tanai H."/>
            <person name="Kimata M."/>
            <person name="Watanabe M."/>
            <person name="Hiraoka S."/>
            <person name="Chiba Y."/>
            <person name="Ishida S."/>
            <person name="Ono Y."/>
            <person name="Takiguchi S."/>
            <person name="Watanabe S."/>
            <person name="Yosida M."/>
            <person name="Hotuta T."/>
            <person name="Kusano J."/>
            <person name="Kanehori K."/>
            <person name="Takahashi-Fujii A."/>
            <person name="Hara H."/>
            <person name="Tanase T.-O."/>
            <person name="Nomura Y."/>
            <person name="Togiya S."/>
            <person name="Komai F."/>
            <person name="Hara R."/>
            <person name="Takeuchi K."/>
            <person name="Arita M."/>
            <person name="Imose N."/>
            <person name="Musashino K."/>
            <person name="Yuuki H."/>
            <person name="Oshima A."/>
            <person name="Sasaki N."/>
            <person name="Aotsuka S."/>
            <person name="Yoshikawa Y."/>
            <person name="Matsunawa H."/>
            <person name="Ichihara T."/>
            <person name="Shiohata N."/>
            <person name="Sano S."/>
            <person name="Moriya S."/>
            <person name="Momiyama H."/>
            <person name="Satoh N."/>
            <person name="Takami S."/>
            <person name="Terashima Y."/>
            <person name="Suzuki O."/>
            <person name="Nakagawa S."/>
            <person name="Senoh A."/>
            <person name="Mizoguchi H."/>
            <person name="Goto Y."/>
            <person name="Shimizu F."/>
            <person name="Wakebe H."/>
            <person name="Hishigaki H."/>
            <person name="Watanabe T."/>
            <person name="Sugiyama A."/>
            <person name="Takemoto M."/>
            <person name="Kawakami B."/>
            <person name="Yamazaki M."/>
            <person name="Watanabe K."/>
            <person name="Kumagai A."/>
            <person name="Itakura S."/>
            <person name="Fukuzumi Y."/>
            <person name="Fujimori Y."/>
            <person name="Komiyama M."/>
            <person name="Tashiro H."/>
            <person name="Tanigami A."/>
            <person name="Fujiwara T."/>
            <person name="Ono T."/>
            <person name="Yamada K."/>
            <person name="Fujii Y."/>
            <person name="Ozaki K."/>
            <person name="Hirao M."/>
            <person name="Ohmori Y."/>
            <person name="Kawabata A."/>
            <person name="Hikiji T."/>
            <person name="Kobatake N."/>
            <person name="Inagaki H."/>
            <person name="Ikema Y."/>
            <person name="Okamoto S."/>
            <person name="Okitani R."/>
            <person name="Kawakami T."/>
            <person name="Noguchi S."/>
            <person name="Itoh T."/>
            <person name="Shigeta K."/>
            <person name="Senba T."/>
            <person name="Matsumura K."/>
            <person name="Nakajima Y."/>
            <person name="Mizuno T."/>
            <person name="Morinaga M."/>
            <person name="Sasaki M."/>
            <person name="Togashi T."/>
            <person name="Oyama M."/>
            <person name="Hata H."/>
            <person name="Watanabe M."/>
            <person name="Komatsu T."/>
            <person name="Mizushima-Sugano J."/>
            <person name="Satoh T."/>
            <person name="Shirai Y."/>
            <person name="Takahashi Y."/>
            <person name="Nakagawa K."/>
            <person name="Okumura K."/>
            <person name="Nagase T."/>
            <person name="Nomura N."/>
            <person name="Kikuchi H."/>
            <person name="Masuho Y."/>
            <person name="Yamashita R."/>
            <person name="Nakai K."/>
            <person name="Yada T."/>
            <person name="Nakamura Y."/>
            <person name="Ohara O."/>
            <person name="Isogai T."/>
            <person name="Sugano S."/>
        </authorList>
    </citation>
    <scope>NUCLEOTIDE SEQUENCE [LARGE SCALE MRNA]</scope>
    <source>
        <tissue>Brain</tissue>
    </source>
</reference>
<reference key="3">
    <citation type="submission" date="2002-06" db="EMBL/GenBank/DDBJ databases">
        <authorList>
            <consortium name="NIEHS SNPs program"/>
        </authorList>
    </citation>
    <scope>NUCLEOTIDE SEQUENCE [GENOMIC DNA]</scope>
    <scope>VARIANTS ARG-205 AND HIS-226</scope>
</reference>
<reference key="4">
    <citation type="journal article" date="2006" name="Nature">
        <title>The DNA sequence and biological annotation of human chromosome 1.</title>
        <authorList>
            <person name="Gregory S.G."/>
            <person name="Barlow K.F."/>
            <person name="McLay K.E."/>
            <person name="Kaul R."/>
            <person name="Swarbreck D."/>
            <person name="Dunham A."/>
            <person name="Scott C.E."/>
            <person name="Howe K.L."/>
            <person name="Woodfine K."/>
            <person name="Spencer C.C.A."/>
            <person name="Jones M.C."/>
            <person name="Gillson C."/>
            <person name="Searle S."/>
            <person name="Zhou Y."/>
            <person name="Kokocinski F."/>
            <person name="McDonald L."/>
            <person name="Evans R."/>
            <person name="Phillips K."/>
            <person name="Atkinson A."/>
            <person name="Cooper R."/>
            <person name="Jones C."/>
            <person name="Hall R.E."/>
            <person name="Andrews T.D."/>
            <person name="Lloyd C."/>
            <person name="Ainscough R."/>
            <person name="Almeida J.P."/>
            <person name="Ambrose K.D."/>
            <person name="Anderson F."/>
            <person name="Andrew R.W."/>
            <person name="Ashwell R.I.S."/>
            <person name="Aubin K."/>
            <person name="Babbage A.K."/>
            <person name="Bagguley C.L."/>
            <person name="Bailey J."/>
            <person name="Beasley H."/>
            <person name="Bethel G."/>
            <person name="Bird C.P."/>
            <person name="Bray-Allen S."/>
            <person name="Brown J.Y."/>
            <person name="Brown A.J."/>
            <person name="Buckley D."/>
            <person name="Burton J."/>
            <person name="Bye J."/>
            <person name="Carder C."/>
            <person name="Chapman J.C."/>
            <person name="Clark S.Y."/>
            <person name="Clarke G."/>
            <person name="Clee C."/>
            <person name="Cobley V."/>
            <person name="Collier R.E."/>
            <person name="Corby N."/>
            <person name="Coville G.J."/>
            <person name="Davies J."/>
            <person name="Deadman R."/>
            <person name="Dunn M."/>
            <person name="Earthrowl M."/>
            <person name="Ellington A.G."/>
            <person name="Errington H."/>
            <person name="Frankish A."/>
            <person name="Frankland J."/>
            <person name="French L."/>
            <person name="Garner P."/>
            <person name="Garnett J."/>
            <person name="Gay L."/>
            <person name="Ghori M.R.J."/>
            <person name="Gibson R."/>
            <person name="Gilby L.M."/>
            <person name="Gillett W."/>
            <person name="Glithero R.J."/>
            <person name="Grafham D.V."/>
            <person name="Griffiths C."/>
            <person name="Griffiths-Jones S."/>
            <person name="Grocock R."/>
            <person name="Hammond S."/>
            <person name="Harrison E.S.I."/>
            <person name="Hart E."/>
            <person name="Haugen E."/>
            <person name="Heath P.D."/>
            <person name="Holmes S."/>
            <person name="Holt K."/>
            <person name="Howden P.J."/>
            <person name="Hunt A.R."/>
            <person name="Hunt S.E."/>
            <person name="Hunter G."/>
            <person name="Isherwood J."/>
            <person name="James R."/>
            <person name="Johnson C."/>
            <person name="Johnson D."/>
            <person name="Joy A."/>
            <person name="Kay M."/>
            <person name="Kershaw J.K."/>
            <person name="Kibukawa M."/>
            <person name="Kimberley A.M."/>
            <person name="King A."/>
            <person name="Knights A.J."/>
            <person name="Lad H."/>
            <person name="Laird G."/>
            <person name="Lawlor S."/>
            <person name="Leongamornlert D.A."/>
            <person name="Lloyd D.M."/>
            <person name="Loveland J."/>
            <person name="Lovell J."/>
            <person name="Lush M.J."/>
            <person name="Lyne R."/>
            <person name="Martin S."/>
            <person name="Mashreghi-Mohammadi M."/>
            <person name="Matthews L."/>
            <person name="Matthews N.S.W."/>
            <person name="McLaren S."/>
            <person name="Milne S."/>
            <person name="Mistry S."/>
            <person name="Moore M.J.F."/>
            <person name="Nickerson T."/>
            <person name="O'Dell C.N."/>
            <person name="Oliver K."/>
            <person name="Palmeiri A."/>
            <person name="Palmer S.A."/>
            <person name="Parker A."/>
            <person name="Patel D."/>
            <person name="Pearce A.V."/>
            <person name="Peck A.I."/>
            <person name="Pelan S."/>
            <person name="Phelps K."/>
            <person name="Phillimore B.J."/>
            <person name="Plumb R."/>
            <person name="Rajan J."/>
            <person name="Raymond C."/>
            <person name="Rouse G."/>
            <person name="Saenphimmachak C."/>
            <person name="Sehra H.K."/>
            <person name="Sheridan E."/>
            <person name="Shownkeen R."/>
            <person name="Sims S."/>
            <person name="Skuce C.D."/>
            <person name="Smith M."/>
            <person name="Steward C."/>
            <person name="Subramanian S."/>
            <person name="Sycamore N."/>
            <person name="Tracey A."/>
            <person name="Tromans A."/>
            <person name="Van Helmond Z."/>
            <person name="Wall M."/>
            <person name="Wallis J.M."/>
            <person name="White S."/>
            <person name="Whitehead S.L."/>
            <person name="Wilkinson J.E."/>
            <person name="Willey D.L."/>
            <person name="Williams H."/>
            <person name="Wilming L."/>
            <person name="Wray P.W."/>
            <person name="Wu Z."/>
            <person name="Coulson A."/>
            <person name="Vaudin M."/>
            <person name="Sulston J.E."/>
            <person name="Durbin R.M."/>
            <person name="Hubbard T."/>
            <person name="Wooster R."/>
            <person name="Dunham I."/>
            <person name="Carter N.P."/>
            <person name="McVean G."/>
            <person name="Ross M.T."/>
            <person name="Harrow J."/>
            <person name="Olson M.V."/>
            <person name="Beck S."/>
            <person name="Rogers J."/>
            <person name="Bentley D.R."/>
        </authorList>
    </citation>
    <scope>NUCLEOTIDE SEQUENCE [LARGE SCALE GENOMIC DNA]</scope>
</reference>
<reference key="5">
    <citation type="journal article" date="2004" name="Genome Res.">
        <title>The status, quality, and expansion of the NIH full-length cDNA project: the Mammalian Gene Collection (MGC).</title>
        <authorList>
            <consortium name="The MGC Project Team"/>
        </authorList>
    </citation>
    <scope>NUCLEOTIDE SEQUENCE [LARGE SCALE MRNA]</scope>
    <scope>VARIANT HIS-226</scope>
    <source>
        <tissue>Eye</tissue>
    </source>
</reference>
<reference key="6">
    <citation type="journal article" date="2005" name="Cell">
        <title>Structure of the Rb C-terminal domain bound to E2F1-DP1: a mechanism for phosphorylation-induced E2F release.</title>
        <authorList>
            <person name="Rubin S.M."/>
            <person name="Gall A.-L."/>
            <person name="Zheng N."/>
            <person name="Pavletich N.P."/>
        </authorList>
    </citation>
    <scope>INTERACTION WITH RB1 AND TFDP1</scope>
</reference>
<reference key="7">
    <citation type="journal article" date="2005" name="Mol. Biol. Cell">
        <title>EAPP, a novel E2F binding protein that modulates E2F-dependent transcription.</title>
        <authorList>
            <person name="Novy M."/>
            <person name="Pohn R."/>
            <person name="Andorfer P."/>
            <person name="Novy-Weiland T."/>
            <person name="Galos B."/>
            <person name="Schwarzmayr L."/>
            <person name="Rotheneder H."/>
        </authorList>
    </citation>
    <scope>INTERACTION WITH EAPP</scope>
</reference>
<reference key="8">
    <citation type="journal article" date="2002" name="Genes Dev.">
        <title>Structural basis for the recognition of the E2F transactivation domain by the retinoblastoma tumor suppressor.</title>
        <authorList>
            <person name="Lee C."/>
            <person name="Chang J.H."/>
            <person name="Lee H.S."/>
            <person name="Cho Y."/>
        </authorList>
    </citation>
    <scope>X-RAY CRYSTALLOGRAPHY (2.2 ANGSTROMS) OF 410-427 IN COMPLEX WITH RB</scope>
</reference>
<name>E2F2_HUMAN</name>
<evidence type="ECO:0000250" key="1"/>
<evidence type="ECO:0000255" key="2"/>
<evidence type="ECO:0000256" key="3">
    <source>
        <dbReference type="SAM" id="MobiDB-lite"/>
    </source>
</evidence>
<evidence type="ECO:0000269" key="4">
    <source>
    </source>
</evidence>
<evidence type="ECO:0000269" key="5">
    <source>
    </source>
</evidence>
<evidence type="ECO:0000269" key="6">
    <source ref="3"/>
</evidence>
<evidence type="ECO:0000305" key="7"/>
<evidence type="ECO:0007829" key="8">
    <source>
        <dbReference type="PDB" id="1N4M"/>
    </source>
</evidence>
<dbReference type="EMBL" id="L22846">
    <property type="protein sequence ID" value="AAA16890.1"/>
    <property type="molecule type" value="mRNA"/>
</dbReference>
<dbReference type="EMBL" id="AK313939">
    <property type="protein sequence ID" value="BAG36658.1"/>
    <property type="molecule type" value="mRNA"/>
</dbReference>
<dbReference type="EMBL" id="AF518877">
    <property type="protein sequence ID" value="AAM54044.1"/>
    <property type="molecule type" value="Genomic_DNA"/>
</dbReference>
<dbReference type="EMBL" id="AL021154">
    <property type="status" value="NOT_ANNOTATED_CDS"/>
    <property type="molecule type" value="Genomic_DNA"/>
</dbReference>
<dbReference type="EMBL" id="BC053676">
    <property type="protein sequence ID" value="AAH53676.1"/>
    <property type="molecule type" value="mRNA"/>
</dbReference>
<dbReference type="CCDS" id="CCDS236.1"/>
<dbReference type="PIR" id="A54595">
    <property type="entry name" value="A54595"/>
</dbReference>
<dbReference type="RefSeq" id="NP_004082.1">
    <property type="nucleotide sequence ID" value="NM_004091.4"/>
</dbReference>
<dbReference type="PDB" id="1N4M">
    <property type="method" value="X-ray"/>
    <property type="resolution" value="2.20 A"/>
    <property type="chains" value="C/D/E=410-427"/>
</dbReference>
<dbReference type="PDBsum" id="1N4M"/>
<dbReference type="SMR" id="Q14209"/>
<dbReference type="BioGRID" id="108202">
    <property type="interactions" value="39"/>
</dbReference>
<dbReference type="ComplexPortal" id="CPX-175">
    <property type="entry name" value="RB1-E2F2-DP1 transcriptional repressor complex"/>
</dbReference>
<dbReference type="ComplexPortal" id="CPX-1972">
    <property type="entry name" value="E2F2-DP1 transcription factor complex"/>
</dbReference>
<dbReference type="DIP" id="DIP-258N"/>
<dbReference type="ELM" id="Q14209"/>
<dbReference type="FunCoup" id="Q14209">
    <property type="interactions" value="1576"/>
</dbReference>
<dbReference type="IntAct" id="Q14209">
    <property type="interactions" value="13"/>
</dbReference>
<dbReference type="MINT" id="Q14209"/>
<dbReference type="STRING" id="9606.ENSP00000355249"/>
<dbReference type="ChEMBL" id="CHEMBL4630726"/>
<dbReference type="GlyGen" id="Q14209">
    <property type="glycosylation" value="2 sites, 1 O-linked glycan (1 site)"/>
</dbReference>
<dbReference type="iPTMnet" id="Q14209"/>
<dbReference type="PhosphoSitePlus" id="Q14209"/>
<dbReference type="BioMuta" id="E2F2"/>
<dbReference type="DMDM" id="2494228"/>
<dbReference type="jPOST" id="Q14209"/>
<dbReference type="MassIVE" id="Q14209"/>
<dbReference type="PaxDb" id="9606-ENSP00000355249"/>
<dbReference type="PeptideAtlas" id="Q14209"/>
<dbReference type="ProteomicsDB" id="59931"/>
<dbReference type="Pumba" id="Q14209"/>
<dbReference type="Antibodypedia" id="4274">
    <property type="antibodies" value="349 antibodies from 36 providers"/>
</dbReference>
<dbReference type="DNASU" id="1870"/>
<dbReference type="Ensembl" id="ENST00000361729.3">
    <property type="protein sequence ID" value="ENSP00000355249.2"/>
    <property type="gene ID" value="ENSG00000007968.7"/>
</dbReference>
<dbReference type="Ensembl" id="ENST00000634683.2">
    <property type="protein sequence ID" value="ENSP00000489612.1"/>
    <property type="gene ID" value="ENSG00000282899.2"/>
</dbReference>
<dbReference type="GeneID" id="1870"/>
<dbReference type="KEGG" id="hsa:1870"/>
<dbReference type="MANE-Select" id="ENST00000361729.3">
    <property type="protein sequence ID" value="ENSP00000355249.2"/>
    <property type="RefSeq nucleotide sequence ID" value="NM_004091.4"/>
    <property type="RefSeq protein sequence ID" value="NP_004082.1"/>
</dbReference>
<dbReference type="UCSC" id="uc001bhe.3">
    <property type="organism name" value="human"/>
</dbReference>
<dbReference type="AGR" id="HGNC:3114"/>
<dbReference type="CTD" id="1870"/>
<dbReference type="DisGeNET" id="1870"/>
<dbReference type="GeneCards" id="E2F2"/>
<dbReference type="HGNC" id="HGNC:3114">
    <property type="gene designation" value="E2F2"/>
</dbReference>
<dbReference type="HPA" id="ENSG00000007968">
    <property type="expression patterns" value="Group enriched (bone marrow, esophagus, lymphoid tissue)"/>
</dbReference>
<dbReference type="MalaCards" id="E2F2"/>
<dbReference type="MIM" id="600426">
    <property type="type" value="gene"/>
</dbReference>
<dbReference type="neXtProt" id="NX_Q14209"/>
<dbReference type="OpenTargets" id="ENSG00000007968"/>
<dbReference type="PharmGKB" id="PA27572"/>
<dbReference type="VEuPathDB" id="HostDB:ENSG00000007968"/>
<dbReference type="eggNOG" id="KOG2577">
    <property type="taxonomic scope" value="Eukaryota"/>
</dbReference>
<dbReference type="GeneTree" id="ENSGT00940000160992"/>
<dbReference type="HOGENOM" id="CLU_032091_0_0_1"/>
<dbReference type="InParanoid" id="Q14209"/>
<dbReference type="OMA" id="WVGRGIF"/>
<dbReference type="OrthoDB" id="1743261at2759"/>
<dbReference type="PAN-GO" id="Q14209">
    <property type="GO annotations" value="4 GO annotations based on evolutionary models"/>
</dbReference>
<dbReference type="PhylomeDB" id="Q14209"/>
<dbReference type="TreeFam" id="TF105566"/>
<dbReference type="PathwayCommons" id="Q14209"/>
<dbReference type="Reactome" id="R-HSA-2559580">
    <property type="pathway name" value="Oxidative Stress Induced Senescence"/>
</dbReference>
<dbReference type="Reactome" id="R-HSA-2559585">
    <property type="pathway name" value="Oncogene Induced Senescence"/>
</dbReference>
<dbReference type="Reactome" id="R-HSA-69231">
    <property type="pathway name" value="Cyclin D associated events in G1"/>
</dbReference>
<dbReference type="Reactome" id="R-HSA-9661069">
    <property type="pathway name" value="Defective binding of RB1 mutants to E2F1,(E2F2, E2F3)"/>
</dbReference>
<dbReference type="SignaLink" id="Q14209"/>
<dbReference type="SIGNOR" id="Q14209"/>
<dbReference type="BioGRID-ORCS" id="1870">
    <property type="hits" value="17 hits in 1190 CRISPR screens"/>
</dbReference>
<dbReference type="EvolutionaryTrace" id="Q14209"/>
<dbReference type="GeneWiki" id="E2F2"/>
<dbReference type="GenomeRNAi" id="1870"/>
<dbReference type="Pharos" id="Q14209">
    <property type="development level" value="Tbio"/>
</dbReference>
<dbReference type="PRO" id="PR:Q14209"/>
<dbReference type="Proteomes" id="UP000005640">
    <property type="component" value="Chromosome 1"/>
</dbReference>
<dbReference type="RNAct" id="Q14209">
    <property type="molecule type" value="protein"/>
</dbReference>
<dbReference type="Bgee" id="ENSG00000007968">
    <property type="expression patterns" value="Expressed in bone marrow and 78 other cell types or tissues"/>
</dbReference>
<dbReference type="GO" id="GO:0000785">
    <property type="term" value="C:chromatin"/>
    <property type="evidence" value="ECO:0000247"/>
    <property type="project" value="NTNU_SB"/>
</dbReference>
<dbReference type="GO" id="GO:0005654">
    <property type="term" value="C:nucleoplasm"/>
    <property type="evidence" value="ECO:0000304"/>
    <property type="project" value="Reactome"/>
</dbReference>
<dbReference type="GO" id="GO:0035189">
    <property type="term" value="C:Rb-E2F complex"/>
    <property type="evidence" value="ECO:0000250"/>
    <property type="project" value="ComplexPortal"/>
</dbReference>
<dbReference type="GO" id="GO:0090575">
    <property type="term" value="C:RNA polymerase II transcription regulator complex"/>
    <property type="evidence" value="ECO:0000314"/>
    <property type="project" value="NTNU_SB"/>
</dbReference>
<dbReference type="GO" id="GO:0000987">
    <property type="term" value="F:cis-regulatory region sequence-specific DNA binding"/>
    <property type="evidence" value="ECO:0000314"/>
    <property type="project" value="UniProtKB"/>
</dbReference>
<dbReference type="GO" id="GO:0003677">
    <property type="term" value="F:DNA binding"/>
    <property type="evidence" value="ECO:0000304"/>
    <property type="project" value="ProtInc"/>
</dbReference>
<dbReference type="GO" id="GO:0001228">
    <property type="term" value="F:DNA-binding transcription activator activity, RNA polymerase II-specific"/>
    <property type="evidence" value="ECO:0000314"/>
    <property type="project" value="NTNU_SB"/>
</dbReference>
<dbReference type="GO" id="GO:0003700">
    <property type="term" value="F:DNA-binding transcription factor activity"/>
    <property type="evidence" value="ECO:0000303"/>
    <property type="project" value="ProtInc"/>
</dbReference>
<dbReference type="GO" id="GO:0000981">
    <property type="term" value="F:DNA-binding transcription factor activity, RNA polymerase II-specific"/>
    <property type="evidence" value="ECO:0000247"/>
    <property type="project" value="NTNU_SB"/>
</dbReference>
<dbReference type="GO" id="GO:0046983">
    <property type="term" value="F:protein dimerization activity"/>
    <property type="evidence" value="ECO:0007669"/>
    <property type="project" value="InterPro"/>
</dbReference>
<dbReference type="GO" id="GO:0000978">
    <property type="term" value="F:RNA polymerase II cis-regulatory region sequence-specific DNA binding"/>
    <property type="evidence" value="ECO:0000318"/>
    <property type="project" value="GO_Central"/>
</dbReference>
<dbReference type="GO" id="GO:0043565">
    <property type="term" value="F:sequence-specific DNA binding"/>
    <property type="evidence" value="ECO:0000314"/>
    <property type="project" value="NTNU_SB"/>
</dbReference>
<dbReference type="GO" id="GO:1990837">
    <property type="term" value="F:sequence-specific double-stranded DNA binding"/>
    <property type="evidence" value="ECO:0000314"/>
    <property type="project" value="ARUK-UCL"/>
</dbReference>
<dbReference type="GO" id="GO:0072332">
    <property type="term" value="P:intrinsic apoptotic signaling pathway by p53 class mediator"/>
    <property type="evidence" value="ECO:0007669"/>
    <property type="project" value="Ensembl"/>
</dbReference>
<dbReference type="GO" id="GO:1990086">
    <property type="term" value="P:lens fiber cell apoptotic process"/>
    <property type="evidence" value="ECO:0007669"/>
    <property type="project" value="Ensembl"/>
</dbReference>
<dbReference type="GO" id="GO:1903671">
    <property type="term" value="P:negative regulation of sprouting angiogenesis"/>
    <property type="evidence" value="ECO:0000316"/>
    <property type="project" value="BHF-UCL"/>
</dbReference>
<dbReference type="GO" id="GO:0045944">
    <property type="term" value="P:positive regulation of transcription by RNA polymerase II"/>
    <property type="evidence" value="ECO:0000314"/>
    <property type="project" value="NTNU_SB"/>
</dbReference>
<dbReference type="GO" id="GO:0051726">
    <property type="term" value="P:regulation of cell cycle"/>
    <property type="evidence" value="ECO:0007669"/>
    <property type="project" value="Ensembl"/>
</dbReference>
<dbReference type="GO" id="GO:0006355">
    <property type="term" value="P:regulation of DNA-templated transcription"/>
    <property type="evidence" value="ECO:0000250"/>
    <property type="project" value="ComplexPortal"/>
</dbReference>
<dbReference type="GO" id="GO:0006357">
    <property type="term" value="P:regulation of transcription by RNA polymerase II"/>
    <property type="evidence" value="ECO:0000318"/>
    <property type="project" value="GO_Central"/>
</dbReference>
<dbReference type="GO" id="GO:0006367">
    <property type="term" value="P:transcription initiation at RNA polymerase II promoter"/>
    <property type="evidence" value="ECO:0000304"/>
    <property type="project" value="ProtInc"/>
</dbReference>
<dbReference type="CDD" id="cd14660">
    <property type="entry name" value="E2F_DD"/>
    <property type="match status" value="1"/>
</dbReference>
<dbReference type="FunFam" id="1.10.10.10:FF:000008">
    <property type="entry name" value="E2F transcription factor 1"/>
    <property type="match status" value="1"/>
</dbReference>
<dbReference type="Gene3D" id="6.10.250.540">
    <property type="match status" value="1"/>
</dbReference>
<dbReference type="Gene3D" id="1.10.10.10">
    <property type="entry name" value="Winged helix-like DNA-binding domain superfamily/Winged helix DNA-binding domain"/>
    <property type="match status" value="1"/>
</dbReference>
<dbReference type="IDEAL" id="IID00171"/>
<dbReference type="InterPro" id="IPR015633">
    <property type="entry name" value="E2F"/>
</dbReference>
<dbReference type="InterPro" id="IPR037241">
    <property type="entry name" value="E2F-DP_heterodim"/>
</dbReference>
<dbReference type="InterPro" id="IPR032198">
    <property type="entry name" value="E2F_CC-MB"/>
</dbReference>
<dbReference type="InterPro" id="IPR003316">
    <property type="entry name" value="E2F_WHTH_DNA-bd_dom"/>
</dbReference>
<dbReference type="InterPro" id="IPR036388">
    <property type="entry name" value="WH-like_DNA-bd_sf"/>
</dbReference>
<dbReference type="InterPro" id="IPR036390">
    <property type="entry name" value="WH_DNA-bd_sf"/>
</dbReference>
<dbReference type="PANTHER" id="PTHR12081">
    <property type="entry name" value="TRANSCRIPTION FACTOR E2F"/>
    <property type="match status" value="1"/>
</dbReference>
<dbReference type="PANTHER" id="PTHR12081:SF50">
    <property type="entry name" value="TRANSCRIPTION FACTOR E2F2"/>
    <property type="match status" value="1"/>
</dbReference>
<dbReference type="Pfam" id="PF16421">
    <property type="entry name" value="E2F_CC-MB"/>
    <property type="match status" value="1"/>
</dbReference>
<dbReference type="Pfam" id="PF02319">
    <property type="entry name" value="E2F_TDP"/>
    <property type="match status" value="1"/>
</dbReference>
<dbReference type="SMART" id="SM01372">
    <property type="entry name" value="E2F_TDP"/>
    <property type="match status" value="1"/>
</dbReference>
<dbReference type="SUPFAM" id="SSF144074">
    <property type="entry name" value="E2F-DP heterodimerization region"/>
    <property type="match status" value="1"/>
</dbReference>
<dbReference type="SUPFAM" id="SSF46785">
    <property type="entry name" value="Winged helix' DNA-binding domain"/>
    <property type="match status" value="1"/>
</dbReference>
<organism>
    <name type="scientific">Homo sapiens</name>
    <name type="common">Human</name>
    <dbReference type="NCBI Taxonomy" id="9606"/>
    <lineage>
        <taxon>Eukaryota</taxon>
        <taxon>Metazoa</taxon>
        <taxon>Chordata</taxon>
        <taxon>Craniata</taxon>
        <taxon>Vertebrata</taxon>
        <taxon>Euteleostomi</taxon>
        <taxon>Mammalia</taxon>
        <taxon>Eutheria</taxon>
        <taxon>Euarchontoglires</taxon>
        <taxon>Primates</taxon>
        <taxon>Haplorrhini</taxon>
        <taxon>Catarrhini</taxon>
        <taxon>Hominidae</taxon>
        <taxon>Homo</taxon>
    </lineage>
</organism>
<protein>
    <recommendedName>
        <fullName>Transcription factor E2F2</fullName>
        <shortName>E2F-2</shortName>
    </recommendedName>
</protein>
<keyword id="KW-0002">3D-structure</keyword>
<keyword id="KW-0010">Activator</keyword>
<keyword id="KW-0131">Cell cycle</keyword>
<keyword id="KW-0238">DNA-binding</keyword>
<keyword id="KW-0539">Nucleus</keyword>
<keyword id="KW-0597">Phosphoprotein</keyword>
<keyword id="KW-1267">Proteomics identification</keyword>
<keyword id="KW-1185">Reference proteome</keyword>
<keyword id="KW-0804">Transcription</keyword>
<keyword id="KW-0805">Transcription regulation</keyword>
<comment type="function">
    <text>Transcription activator that binds DNA cooperatively with DP proteins through the E2 recognition site, 5'-TTTC[CG]CGC-3' found in the promoter region of a number of genes whose products are involved in cell cycle regulation or in DNA replication. The DRTF1/E2F complex functions in the control of cell-cycle progression from g1 to s phase. E2F2 binds specifically to RB1 in a cell-cycle dependent manner.</text>
</comment>
<comment type="subunit">
    <text evidence="4">Component of the DRTF1/E2F transcription factor complex. Forms heterodimers with DP family members. The E2F2 complex binds specifically hypophosphorylated retinoblastoma protein RB1. During the cell cycle, RB1 becomes phosphorylated in mid-to-late G1 phase, detaches from the DRTF1/E2F complex, rendering E2F transcriptionally active. Viral oncoproteins, notably E1A, T-antigen and HPV E7, are capable of sequestering RB1, thus releasing the active complex. Binds EAPP.</text>
</comment>
<comment type="interaction">
    <interactant intactId="EBI-718476">
        <id>Q14209</id>
    </interactant>
    <interactant intactId="EBI-491274">
        <id>P06400</id>
        <label>RB1</label>
    </interactant>
    <organismsDiffer>false</organismsDiffer>
    <experiments>5</experiments>
</comment>
<comment type="interaction">
    <interactant intactId="EBI-718476">
        <id>Q14209</id>
    </interactant>
    <interactant intactId="EBI-749713">
        <id>Q14186</id>
        <label>TFDP1</label>
    </interactant>
    <organismsDiffer>false</organismsDiffer>
    <experiments>3</experiments>
</comment>
<comment type="subcellular location">
    <subcellularLocation>
        <location>Nucleus</location>
    </subcellularLocation>
</comment>
<comment type="tissue specificity">
    <text>Highest level of expression is found in placenta, low levels are found in lung. Found as well in many immortalized cell lines derived from tumor samples.</text>
</comment>
<comment type="PTM">
    <text evidence="1">Phosphorylated by CDK2 and cyclin A-CDK2 in the S-phase.</text>
</comment>
<comment type="similarity">
    <text evidence="7">Belongs to the E2F/DP family.</text>
</comment>
<feature type="chain" id="PRO_0000219464" description="Transcription factor E2F2">
    <location>
        <begin position="1"/>
        <end position="437"/>
    </location>
</feature>
<feature type="DNA-binding region" evidence="2">
    <location>
        <begin position="107"/>
        <end position="196"/>
    </location>
</feature>
<feature type="region of interest" description="Cyclin A/CDK2 binding" evidence="2">
    <location>
        <begin position="65"/>
        <end position="105"/>
    </location>
</feature>
<feature type="region of interest" description="Leucine-zipper">
    <location>
        <begin position="155"/>
        <end position="176"/>
    </location>
</feature>
<feature type="region of interest" description="Dimerization" evidence="2">
    <location>
        <begin position="197"/>
        <end position="289"/>
    </location>
</feature>
<feature type="region of interest" description="Disordered" evidence="3">
    <location>
        <begin position="307"/>
        <end position="368"/>
    </location>
</feature>
<feature type="region of interest" description="Transactivation" evidence="2">
    <location>
        <begin position="359"/>
        <end position="437"/>
    </location>
</feature>
<feature type="region of interest" description="Retinoblastoma protein binding" evidence="2">
    <location>
        <begin position="410"/>
        <end position="427"/>
    </location>
</feature>
<feature type="short sequence motif" description="DEF box">
    <location>
        <begin position="160"/>
        <end position="196"/>
    </location>
</feature>
<feature type="compositionally biased region" description="Low complexity" evidence="3">
    <location>
        <begin position="315"/>
        <end position="330"/>
    </location>
</feature>
<feature type="compositionally biased region" description="Pro residues" evidence="3">
    <location>
        <begin position="351"/>
        <end position="365"/>
    </location>
</feature>
<feature type="sequence variant" id="VAR_018990" description="In dbSNP:rs2229297." evidence="6">
    <original>G</original>
    <variation>R</variation>
    <location>
        <position position="205"/>
    </location>
</feature>
<feature type="sequence variant" id="VAR_018991" description="In dbSNP:rs2075995." evidence="5 6">
    <original>Q</original>
    <variation>H</variation>
    <location>
        <position position="226"/>
    </location>
</feature>
<feature type="helix" evidence="8">
    <location>
        <begin position="422"/>
        <end position="424"/>
    </location>
</feature>
<proteinExistence type="evidence at protein level"/>
<accession>Q14209</accession>
<accession>B2R9W1</accession>
<accession>Q7Z6H1</accession>
<gene>
    <name type="primary">E2F2</name>
</gene>
<sequence>MLQGPRALASAAGQTPKVVPAMSPTELWPSGLSSPQLCPATATYYTPLYPQTAPPAAAPGTCLDATPHGPEGQVVRCLPAGRLPAKRKLDLEGIGRPVVPEFPTPKGKCIRVDGLPSPKTPKSPGEKTRYDTSLGLLTKKFIYLLSESEDGVLDLNWAAEVLDVQKRRIYDITNVLEGIQLIRKKAKNNIQWVGRGMFEDPTRPGKQQQLGQELKELMNTEQALDQLIQSCSLSFKHLTEDKANKRLAYVTYQDIRAVGNFKEQTVIAVKAPPQTRLEVPDRTEDNLQIYLKSTQGPIEVYLCPEEVQEPDSPSEEPLPSTSTLCPSPDSAQPSSSTDPSIMEPTASSVPAPAPTPQQAPPPPSLVPLEATDSLLELPHPLLQQTEDQFLSPTLACSSPLISFSPSLDQDDYLWGLEAGEGISDLFDSYDLGDLLIN</sequence>